<reference key="1">
    <citation type="journal article" date="2000" name="Science">
        <title>The genome sequence of Drosophila melanogaster.</title>
        <authorList>
            <person name="Adams M.D."/>
            <person name="Celniker S.E."/>
            <person name="Holt R.A."/>
            <person name="Evans C.A."/>
            <person name="Gocayne J.D."/>
            <person name="Amanatides P.G."/>
            <person name="Scherer S.E."/>
            <person name="Li P.W."/>
            <person name="Hoskins R.A."/>
            <person name="Galle R.F."/>
            <person name="George R.A."/>
            <person name="Lewis S.E."/>
            <person name="Richards S."/>
            <person name="Ashburner M."/>
            <person name="Henderson S.N."/>
            <person name="Sutton G.G."/>
            <person name="Wortman J.R."/>
            <person name="Yandell M.D."/>
            <person name="Zhang Q."/>
            <person name="Chen L.X."/>
            <person name="Brandon R.C."/>
            <person name="Rogers Y.-H.C."/>
            <person name="Blazej R.G."/>
            <person name="Champe M."/>
            <person name="Pfeiffer B.D."/>
            <person name="Wan K.H."/>
            <person name="Doyle C."/>
            <person name="Baxter E.G."/>
            <person name="Helt G."/>
            <person name="Nelson C.R."/>
            <person name="Miklos G.L.G."/>
            <person name="Abril J.F."/>
            <person name="Agbayani A."/>
            <person name="An H.-J."/>
            <person name="Andrews-Pfannkoch C."/>
            <person name="Baldwin D."/>
            <person name="Ballew R.M."/>
            <person name="Basu A."/>
            <person name="Baxendale J."/>
            <person name="Bayraktaroglu L."/>
            <person name="Beasley E.M."/>
            <person name="Beeson K.Y."/>
            <person name="Benos P.V."/>
            <person name="Berman B.P."/>
            <person name="Bhandari D."/>
            <person name="Bolshakov S."/>
            <person name="Borkova D."/>
            <person name="Botchan M.R."/>
            <person name="Bouck J."/>
            <person name="Brokstein P."/>
            <person name="Brottier P."/>
            <person name="Burtis K.C."/>
            <person name="Busam D.A."/>
            <person name="Butler H."/>
            <person name="Cadieu E."/>
            <person name="Center A."/>
            <person name="Chandra I."/>
            <person name="Cherry J.M."/>
            <person name="Cawley S."/>
            <person name="Dahlke C."/>
            <person name="Davenport L.B."/>
            <person name="Davies P."/>
            <person name="de Pablos B."/>
            <person name="Delcher A."/>
            <person name="Deng Z."/>
            <person name="Mays A.D."/>
            <person name="Dew I."/>
            <person name="Dietz S.M."/>
            <person name="Dodson K."/>
            <person name="Doup L.E."/>
            <person name="Downes M."/>
            <person name="Dugan-Rocha S."/>
            <person name="Dunkov B.C."/>
            <person name="Dunn P."/>
            <person name="Durbin K.J."/>
            <person name="Evangelista C.C."/>
            <person name="Ferraz C."/>
            <person name="Ferriera S."/>
            <person name="Fleischmann W."/>
            <person name="Fosler C."/>
            <person name="Gabrielian A.E."/>
            <person name="Garg N.S."/>
            <person name="Gelbart W.M."/>
            <person name="Glasser K."/>
            <person name="Glodek A."/>
            <person name="Gong F."/>
            <person name="Gorrell J.H."/>
            <person name="Gu Z."/>
            <person name="Guan P."/>
            <person name="Harris M."/>
            <person name="Harris N.L."/>
            <person name="Harvey D.A."/>
            <person name="Heiman T.J."/>
            <person name="Hernandez J.R."/>
            <person name="Houck J."/>
            <person name="Hostin D."/>
            <person name="Houston K.A."/>
            <person name="Howland T.J."/>
            <person name="Wei M.-H."/>
            <person name="Ibegwam C."/>
            <person name="Jalali M."/>
            <person name="Kalush F."/>
            <person name="Karpen G.H."/>
            <person name="Ke Z."/>
            <person name="Kennison J.A."/>
            <person name="Ketchum K.A."/>
            <person name="Kimmel B.E."/>
            <person name="Kodira C.D."/>
            <person name="Kraft C.L."/>
            <person name="Kravitz S."/>
            <person name="Kulp D."/>
            <person name="Lai Z."/>
            <person name="Lasko P."/>
            <person name="Lei Y."/>
            <person name="Levitsky A.A."/>
            <person name="Li J.H."/>
            <person name="Li Z."/>
            <person name="Liang Y."/>
            <person name="Lin X."/>
            <person name="Liu X."/>
            <person name="Mattei B."/>
            <person name="McIntosh T.C."/>
            <person name="McLeod M.P."/>
            <person name="McPherson D."/>
            <person name="Merkulov G."/>
            <person name="Milshina N.V."/>
            <person name="Mobarry C."/>
            <person name="Morris J."/>
            <person name="Moshrefi A."/>
            <person name="Mount S.M."/>
            <person name="Moy M."/>
            <person name="Murphy B."/>
            <person name="Murphy L."/>
            <person name="Muzny D.M."/>
            <person name="Nelson D.L."/>
            <person name="Nelson D.R."/>
            <person name="Nelson K.A."/>
            <person name="Nixon K."/>
            <person name="Nusskern D.R."/>
            <person name="Pacleb J.M."/>
            <person name="Palazzolo M."/>
            <person name="Pittman G.S."/>
            <person name="Pan S."/>
            <person name="Pollard J."/>
            <person name="Puri V."/>
            <person name="Reese M.G."/>
            <person name="Reinert K."/>
            <person name="Remington K."/>
            <person name="Saunders R.D.C."/>
            <person name="Scheeler F."/>
            <person name="Shen H."/>
            <person name="Shue B.C."/>
            <person name="Siden-Kiamos I."/>
            <person name="Simpson M."/>
            <person name="Skupski M.P."/>
            <person name="Smith T.J."/>
            <person name="Spier E."/>
            <person name="Spradling A.C."/>
            <person name="Stapleton M."/>
            <person name="Strong R."/>
            <person name="Sun E."/>
            <person name="Svirskas R."/>
            <person name="Tector C."/>
            <person name="Turner R."/>
            <person name="Venter E."/>
            <person name="Wang A.H."/>
            <person name="Wang X."/>
            <person name="Wang Z.-Y."/>
            <person name="Wassarman D.A."/>
            <person name="Weinstock G.M."/>
            <person name="Weissenbach J."/>
            <person name="Williams S.M."/>
            <person name="Woodage T."/>
            <person name="Worley K.C."/>
            <person name="Wu D."/>
            <person name="Yang S."/>
            <person name="Yao Q.A."/>
            <person name="Ye J."/>
            <person name="Yeh R.-F."/>
            <person name="Zaveri J.S."/>
            <person name="Zhan M."/>
            <person name="Zhang G."/>
            <person name="Zhao Q."/>
            <person name="Zheng L."/>
            <person name="Zheng X.H."/>
            <person name="Zhong F.N."/>
            <person name="Zhong W."/>
            <person name="Zhou X."/>
            <person name="Zhu S.C."/>
            <person name="Zhu X."/>
            <person name="Smith H.O."/>
            <person name="Gibbs R.A."/>
            <person name="Myers E.W."/>
            <person name="Rubin G.M."/>
            <person name="Venter J.C."/>
        </authorList>
    </citation>
    <scope>NUCLEOTIDE SEQUENCE [LARGE SCALE GENOMIC DNA]</scope>
    <source>
        <strain>Berkeley</strain>
    </source>
</reference>
<reference key="2">
    <citation type="journal article" date="2002" name="Genome Biol.">
        <title>Annotation of the Drosophila melanogaster euchromatic genome: a systematic review.</title>
        <authorList>
            <person name="Misra S."/>
            <person name="Crosby M.A."/>
            <person name="Mungall C.J."/>
            <person name="Matthews B.B."/>
            <person name="Campbell K.S."/>
            <person name="Hradecky P."/>
            <person name="Huang Y."/>
            <person name="Kaminker J.S."/>
            <person name="Millburn G.H."/>
            <person name="Prochnik S.E."/>
            <person name="Smith C.D."/>
            <person name="Tupy J.L."/>
            <person name="Whitfield E.J."/>
            <person name="Bayraktaroglu L."/>
            <person name="Berman B.P."/>
            <person name="Bettencourt B.R."/>
            <person name="Celniker S.E."/>
            <person name="de Grey A.D.N.J."/>
            <person name="Drysdale R.A."/>
            <person name="Harris N.L."/>
            <person name="Richter J."/>
            <person name="Russo S."/>
            <person name="Schroeder A.J."/>
            <person name="Shu S.Q."/>
            <person name="Stapleton M."/>
            <person name="Yamada C."/>
            <person name="Ashburner M."/>
            <person name="Gelbart W.M."/>
            <person name="Rubin G.M."/>
            <person name="Lewis S.E."/>
        </authorList>
    </citation>
    <scope>GENOME REANNOTATION</scope>
    <source>
        <strain>Berkeley</strain>
    </source>
</reference>
<reference key="3">
    <citation type="submission" date="2003-12" db="EMBL/GenBank/DDBJ databases">
        <authorList>
            <person name="Stapleton M."/>
            <person name="Brokstein P."/>
            <person name="Hong L."/>
            <person name="Agbayani A."/>
            <person name="Carlson J.W."/>
            <person name="Champe M."/>
            <person name="Chavez C."/>
            <person name="Dorsett V."/>
            <person name="Dresnek D."/>
            <person name="Farfan D."/>
            <person name="Frise E."/>
            <person name="George R.A."/>
            <person name="Gonzalez M."/>
            <person name="Guarin H."/>
            <person name="Kronmiller B."/>
            <person name="Li P.W."/>
            <person name="Liao G."/>
            <person name="Miranda A."/>
            <person name="Mungall C.J."/>
            <person name="Nunoo J."/>
            <person name="Pacleb J.M."/>
            <person name="Paragas V."/>
            <person name="Park S."/>
            <person name="Patel S."/>
            <person name="Phouanenavong S."/>
            <person name="Wan K.H."/>
            <person name="Yu C."/>
            <person name="Lewis S.E."/>
            <person name="Rubin G.M."/>
            <person name="Celniker S.E."/>
        </authorList>
    </citation>
    <scope>NUCLEOTIDE SEQUENCE [LARGE SCALE MRNA]</scope>
    <source>
        <strain>Berkeley</strain>
        <tissue>Embryo</tissue>
    </source>
</reference>
<reference key="4">
    <citation type="journal article" date="2008" name="J. Proteome Res.">
        <title>Phosphoproteome analysis of Drosophila melanogaster embryos.</title>
        <authorList>
            <person name="Zhai B."/>
            <person name="Villen J."/>
            <person name="Beausoleil S.A."/>
            <person name="Mintseris J."/>
            <person name="Gygi S.P."/>
        </authorList>
    </citation>
    <scope>PHOSPHORYLATION [LARGE SCALE ANALYSIS] AT SER-63</scope>
    <scope>IDENTIFICATION BY MASS SPECTROMETRY</scope>
    <source>
        <tissue>Embryo</tissue>
    </source>
</reference>
<organism>
    <name type="scientific">Drosophila melanogaster</name>
    <name type="common">Fruit fly</name>
    <dbReference type="NCBI Taxonomy" id="7227"/>
    <lineage>
        <taxon>Eukaryota</taxon>
        <taxon>Metazoa</taxon>
        <taxon>Ecdysozoa</taxon>
        <taxon>Arthropoda</taxon>
        <taxon>Hexapoda</taxon>
        <taxon>Insecta</taxon>
        <taxon>Pterygota</taxon>
        <taxon>Neoptera</taxon>
        <taxon>Endopterygota</taxon>
        <taxon>Diptera</taxon>
        <taxon>Brachycera</taxon>
        <taxon>Muscomorpha</taxon>
        <taxon>Ephydroidea</taxon>
        <taxon>Drosophilidae</taxon>
        <taxon>Drosophila</taxon>
        <taxon>Sophophora</taxon>
    </lineage>
</organism>
<comment type="function">
    <text evidence="1">ATP-dependent annealing helicase that catalyzes the rewinding of the stably unwound DNA.</text>
</comment>
<comment type="subcellular location">
    <subcellularLocation>
        <location evidence="1">Nucleus</location>
    </subcellularLocation>
</comment>
<comment type="similarity">
    <text evidence="5">Belongs to the SNF2/RAD54 helicase family. SMARCAL1 subfamily.</text>
</comment>
<feature type="chain" id="PRO_0000361536" description="SWI/SNF-related matrix-associated actin-dependent regulator of chromatin subfamily A-like protein 1">
    <location>
        <begin position="1"/>
        <end position="755"/>
    </location>
</feature>
<feature type="domain" description="HARP" evidence="5">
    <location>
        <begin position="139"/>
        <end position="217"/>
    </location>
</feature>
<feature type="domain" description="Helicase ATP-binding" evidence="3">
    <location>
        <begin position="256"/>
        <end position="412"/>
    </location>
</feature>
<feature type="domain" description="Helicase C-terminal" evidence="4">
    <location>
        <begin position="527"/>
        <end position="681"/>
    </location>
</feature>
<feature type="region of interest" description="Disordered" evidence="6">
    <location>
        <begin position="26"/>
        <end position="91"/>
    </location>
</feature>
<feature type="region of interest" description="Disordered" evidence="6">
    <location>
        <begin position="104"/>
        <end position="134"/>
    </location>
</feature>
<feature type="coiled-coil region" evidence="2">
    <location>
        <begin position="7"/>
        <end position="27"/>
    </location>
</feature>
<feature type="short sequence motif" description="DESH box">
    <location>
        <begin position="361"/>
        <end position="364"/>
    </location>
</feature>
<feature type="compositionally biased region" description="Polar residues" evidence="6">
    <location>
        <begin position="32"/>
        <end position="63"/>
    </location>
</feature>
<feature type="binding site" evidence="3">
    <location>
        <begin position="269"/>
        <end position="276"/>
    </location>
    <ligand>
        <name>ATP</name>
        <dbReference type="ChEBI" id="CHEBI:30616"/>
    </ligand>
</feature>
<feature type="modified residue" description="Phosphoserine" evidence="7">
    <location>
        <position position="63"/>
    </location>
</feature>
<evidence type="ECO:0000250" key="1"/>
<evidence type="ECO:0000255" key="2"/>
<evidence type="ECO:0000255" key="3">
    <source>
        <dbReference type="PROSITE-ProRule" id="PRU00541"/>
    </source>
</evidence>
<evidence type="ECO:0000255" key="4">
    <source>
        <dbReference type="PROSITE-ProRule" id="PRU00542"/>
    </source>
</evidence>
<evidence type="ECO:0000255" key="5">
    <source>
        <dbReference type="PROSITE-ProRule" id="PRU00800"/>
    </source>
</evidence>
<evidence type="ECO:0000256" key="6">
    <source>
        <dbReference type="SAM" id="MobiDB-lite"/>
    </source>
</evidence>
<evidence type="ECO:0000269" key="7">
    <source>
    </source>
</evidence>
<name>SMAL1_DROME</name>
<accession>Q9VMX6</accession>
<protein>
    <recommendedName>
        <fullName>SWI/SNF-related matrix-associated actin-dependent regulator of chromatin subfamily A-like protein 1</fullName>
        <ecNumber>3.6.4.-</ecNumber>
    </recommendedName>
</protein>
<dbReference type="EC" id="3.6.4.-"/>
<dbReference type="EMBL" id="AE014134">
    <property type="protein sequence ID" value="AAF52182.2"/>
    <property type="molecule type" value="Genomic_DNA"/>
</dbReference>
<dbReference type="EMBL" id="BT011033">
    <property type="protein sequence ID" value="AAR30193.1"/>
    <property type="molecule type" value="mRNA"/>
</dbReference>
<dbReference type="RefSeq" id="NP_608883.1">
    <property type="nucleotide sequence ID" value="NM_135039.2"/>
</dbReference>
<dbReference type="SMR" id="Q9VMX6"/>
<dbReference type="BioGRID" id="59894">
    <property type="interactions" value="22"/>
</dbReference>
<dbReference type="FunCoup" id="Q9VMX6">
    <property type="interactions" value="1358"/>
</dbReference>
<dbReference type="STRING" id="7227.FBpp0078631"/>
<dbReference type="GlyGen" id="Q9VMX6">
    <property type="glycosylation" value="1 site"/>
</dbReference>
<dbReference type="iPTMnet" id="Q9VMX6"/>
<dbReference type="PaxDb" id="7227-FBpp0078631"/>
<dbReference type="DNASU" id="33709"/>
<dbReference type="EnsemblMetazoa" id="FBtr0078992">
    <property type="protein sequence ID" value="FBpp0078631"/>
    <property type="gene ID" value="FBgn0031655"/>
</dbReference>
<dbReference type="GeneID" id="33709"/>
<dbReference type="KEGG" id="dme:Dmel_CG3753"/>
<dbReference type="UCSC" id="CG3753-RA">
    <property type="organism name" value="d. melanogaster"/>
</dbReference>
<dbReference type="AGR" id="FB:FBgn0031655"/>
<dbReference type="CTD" id="33709"/>
<dbReference type="FlyBase" id="FBgn0031655">
    <property type="gene designation" value="Marcal1"/>
</dbReference>
<dbReference type="VEuPathDB" id="VectorBase:FBgn0031655"/>
<dbReference type="eggNOG" id="KOG1000">
    <property type="taxonomic scope" value="Eukaryota"/>
</dbReference>
<dbReference type="GeneTree" id="ENSGT00940000172463"/>
<dbReference type="HOGENOM" id="CLU_000315_33_1_1"/>
<dbReference type="InParanoid" id="Q9VMX6"/>
<dbReference type="OMA" id="WTNDETK"/>
<dbReference type="OrthoDB" id="2801544at2759"/>
<dbReference type="PhylomeDB" id="Q9VMX6"/>
<dbReference type="BioGRID-ORCS" id="33709">
    <property type="hits" value="0 hits in 3 CRISPR screens"/>
</dbReference>
<dbReference type="GenomeRNAi" id="33709"/>
<dbReference type="PRO" id="PR:Q9VMX6"/>
<dbReference type="Proteomes" id="UP000000803">
    <property type="component" value="Chromosome 2L"/>
</dbReference>
<dbReference type="Bgee" id="FBgn0031655">
    <property type="expression patterns" value="Expressed in cleaving embryo and 26 other cell types or tissues"/>
</dbReference>
<dbReference type="GO" id="GO:0043596">
    <property type="term" value="C:nuclear replication fork"/>
    <property type="evidence" value="ECO:0000318"/>
    <property type="project" value="GO_Central"/>
</dbReference>
<dbReference type="GO" id="GO:0005634">
    <property type="term" value="C:nucleus"/>
    <property type="evidence" value="ECO:0000314"/>
    <property type="project" value="FlyBase"/>
</dbReference>
<dbReference type="GO" id="GO:0005705">
    <property type="term" value="C:polytene chromosome interband"/>
    <property type="evidence" value="ECO:0000314"/>
    <property type="project" value="FlyBase"/>
</dbReference>
<dbReference type="GO" id="GO:0005524">
    <property type="term" value="F:ATP binding"/>
    <property type="evidence" value="ECO:0007669"/>
    <property type="project" value="UniProtKB-KW"/>
</dbReference>
<dbReference type="GO" id="GO:0036310">
    <property type="term" value="F:ATP-dependent DNA/DNA annealing activity"/>
    <property type="evidence" value="ECO:0000314"/>
    <property type="project" value="FlyBase"/>
</dbReference>
<dbReference type="GO" id="GO:0009378">
    <property type="term" value="F:four-way junction helicase activity"/>
    <property type="evidence" value="ECO:0000314"/>
    <property type="project" value="FlyBase"/>
</dbReference>
<dbReference type="GO" id="GO:0016787">
    <property type="term" value="F:hydrolase activity"/>
    <property type="evidence" value="ECO:0007669"/>
    <property type="project" value="UniProtKB-KW"/>
</dbReference>
<dbReference type="GO" id="GO:0006281">
    <property type="term" value="P:DNA repair"/>
    <property type="evidence" value="ECO:0000318"/>
    <property type="project" value="GO_Central"/>
</dbReference>
<dbReference type="GO" id="GO:0010709">
    <property type="term" value="P:heteroduplex formation involved in double-strand break repair via synthesis-dependent strand annealing"/>
    <property type="evidence" value="ECO:0000315"/>
    <property type="project" value="FlyBase"/>
</dbReference>
<dbReference type="GO" id="GO:0006357">
    <property type="term" value="P:regulation of transcription by RNA polymerase II"/>
    <property type="evidence" value="ECO:0000250"/>
    <property type="project" value="UniProtKB"/>
</dbReference>
<dbReference type="GO" id="GO:0031297">
    <property type="term" value="P:replication fork processing"/>
    <property type="evidence" value="ECO:0000318"/>
    <property type="project" value="GO_Central"/>
</dbReference>
<dbReference type="CDD" id="cd18010">
    <property type="entry name" value="DEXHc_HARP_SMARCAL1"/>
    <property type="match status" value="1"/>
</dbReference>
<dbReference type="CDD" id="cd18793">
    <property type="entry name" value="SF2_C_SNF"/>
    <property type="match status" value="1"/>
</dbReference>
<dbReference type="FunFam" id="3.40.50.300:FF:003519">
    <property type="entry name" value="GD23310"/>
    <property type="match status" value="1"/>
</dbReference>
<dbReference type="FunFam" id="3.40.50.10810:FF:000066">
    <property type="entry name" value="Uncharacterized protein (Fragment)"/>
    <property type="match status" value="1"/>
</dbReference>
<dbReference type="Gene3D" id="3.40.50.300">
    <property type="entry name" value="P-loop containing nucleotide triphosphate hydrolases"/>
    <property type="match status" value="1"/>
</dbReference>
<dbReference type="Gene3D" id="3.40.50.10810">
    <property type="entry name" value="Tandem AAA-ATPase domain"/>
    <property type="match status" value="1"/>
</dbReference>
<dbReference type="InterPro" id="IPR010003">
    <property type="entry name" value="HARP_dom"/>
</dbReference>
<dbReference type="InterPro" id="IPR014001">
    <property type="entry name" value="Helicase_ATP-bd"/>
</dbReference>
<dbReference type="InterPro" id="IPR001650">
    <property type="entry name" value="Helicase_C-like"/>
</dbReference>
<dbReference type="InterPro" id="IPR027417">
    <property type="entry name" value="P-loop_NTPase"/>
</dbReference>
<dbReference type="InterPro" id="IPR038718">
    <property type="entry name" value="SNF2-like_sf"/>
</dbReference>
<dbReference type="InterPro" id="IPR049730">
    <property type="entry name" value="SNF2/RAD54-like_C"/>
</dbReference>
<dbReference type="InterPro" id="IPR000330">
    <property type="entry name" value="SNF2_N"/>
</dbReference>
<dbReference type="PANTHER" id="PTHR45766">
    <property type="entry name" value="DNA ANNEALING HELICASE AND ENDONUCLEASE ZRANB3 FAMILY MEMBER"/>
    <property type="match status" value="1"/>
</dbReference>
<dbReference type="PANTHER" id="PTHR45766:SF6">
    <property type="entry name" value="SWI_SNF-RELATED MATRIX-ASSOCIATED ACTIN-DEPENDENT REGULATOR OF CHROMATIN SUBFAMILY A-LIKE PROTEIN 1"/>
    <property type="match status" value="1"/>
</dbReference>
<dbReference type="Pfam" id="PF07443">
    <property type="entry name" value="HARP"/>
    <property type="match status" value="1"/>
</dbReference>
<dbReference type="Pfam" id="PF00271">
    <property type="entry name" value="Helicase_C"/>
    <property type="match status" value="1"/>
</dbReference>
<dbReference type="Pfam" id="PF00176">
    <property type="entry name" value="SNF2-rel_dom"/>
    <property type="match status" value="1"/>
</dbReference>
<dbReference type="SMART" id="SM00487">
    <property type="entry name" value="DEXDc"/>
    <property type="match status" value="1"/>
</dbReference>
<dbReference type="SMART" id="SM00490">
    <property type="entry name" value="HELICc"/>
    <property type="match status" value="1"/>
</dbReference>
<dbReference type="SUPFAM" id="SSF52540">
    <property type="entry name" value="P-loop containing nucleoside triphosphate hydrolases"/>
    <property type="match status" value="2"/>
</dbReference>
<dbReference type="PROSITE" id="PS51467">
    <property type="entry name" value="HARP"/>
    <property type="match status" value="1"/>
</dbReference>
<dbReference type="PROSITE" id="PS51192">
    <property type="entry name" value="HELICASE_ATP_BIND_1"/>
    <property type="match status" value="1"/>
</dbReference>
<dbReference type="PROSITE" id="PS51194">
    <property type="entry name" value="HELICASE_CTER"/>
    <property type="match status" value="1"/>
</dbReference>
<gene>
    <name type="primary">Marcal1</name>
    <name type="ORF">CG3753</name>
</gene>
<sequence length="755" mass="84568">MSTCSSSEIAEKKRIALAKLQAKKSQLLASAPATNGKSTTSATGATQHANNGKSNPNQPQAKSPLNFYRSPTGEQKKINRSGPTPGDNKSSSFLNALKAIKQTSNRELSRGAAHPYQRPNGGNERNKPTLSLSSDKEKPVAVLLGNSITCNLYLISTHRFAAQTSGYHEQLVTVFKNMPTKCYDGQTRIWSFDLSDYQSLKTHAADLKPYVHMNGIPKKVLDLCGQPPVVPERSVLASIEPKLADQLMPFQQDGVCFAIAQKGRIMICDEMGLGKTYQALAVADYFKDDWPLLVCTTASTRDSWAKHIMDLLPKVPIHYVQVLNNNQLYVGEAKVLITSYNMMERHEDKLMQRKFGFIIFDESHTLKNSKAKCTTTAKRLTDQAKRVVLLSGTPALSRPLELFTQLQMIDGKFMNFMEFTTRYCDGKQSTFGWDANGQSNLEELKVILHLKYMLRRTKVEVLPQLAEKNRETVVLDPALVWTNAETKETLDAFNKELKTAKGRATEEILLRFYARTAEVKTRAVCAYLKTLVKEQKKFIIFAHHRVMMDAISDFLSGLKVHYIRIDGQTRSDHRSDSVDTFQKKSSCKVALLSLKACNSGITLTAAEIIVFAELDWNPSTLAQAESRAHRIGQTKPVICRYLIAHNTADDIIWNMLKNKQEVLSKVGIFAENLQKATHTAAPTSSHKIEEYFSPSTSTSLEPERNSIKQYFSTIPAKEPPEQNNNTEMTKVNKAESDIAAFFNDDDDEAFLELDI</sequence>
<proteinExistence type="evidence at protein level"/>
<keyword id="KW-0067">ATP-binding</keyword>
<keyword id="KW-0175">Coiled coil</keyword>
<keyword id="KW-0347">Helicase</keyword>
<keyword id="KW-0378">Hydrolase</keyword>
<keyword id="KW-0547">Nucleotide-binding</keyword>
<keyword id="KW-0539">Nucleus</keyword>
<keyword id="KW-0597">Phosphoprotein</keyword>
<keyword id="KW-1185">Reference proteome</keyword>
<keyword id="KW-0677">Repeat</keyword>